<sequence length="103" mass="11542">MASNKLRIYLKAYDHTLLDESAKRIAESAKKSGAIVAGPMPLPTKIRKYTVLRSVHVNKDSREQFEMRVHRRMIELVNSTDKAISSLTSVHLPAGVGIEIKQV</sequence>
<feature type="chain" id="PRO_0000146533" description="Small ribosomal subunit protein uS10">
    <location>
        <begin position="1"/>
        <end position="103"/>
    </location>
</feature>
<dbReference type="EMBL" id="AE009951">
    <property type="protein sequence ID" value="AAL93761.1"/>
    <property type="molecule type" value="Genomic_DNA"/>
</dbReference>
<dbReference type="RefSeq" id="NP_602462.1">
    <property type="nucleotide sequence ID" value="NC_003454.1"/>
</dbReference>
<dbReference type="RefSeq" id="WP_005897308.1">
    <property type="nucleotide sequence ID" value="NZ_OZ209243.1"/>
</dbReference>
<dbReference type="SMR" id="Q8RIF4"/>
<dbReference type="FunCoup" id="Q8RIF4">
    <property type="interactions" value="398"/>
</dbReference>
<dbReference type="STRING" id="190304.FN1646"/>
<dbReference type="PaxDb" id="190304-FN1646"/>
<dbReference type="EnsemblBacteria" id="AAL93761">
    <property type="protein sequence ID" value="AAL93761"/>
    <property type="gene ID" value="FN1646"/>
</dbReference>
<dbReference type="GeneID" id="79799757"/>
<dbReference type="KEGG" id="fnu:FN1646"/>
<dbReference type="PATRIC" id="fig|190304.8.peg.139"/>
<dbReference type="eggNOG" id="COG0051">
    <property type="taxonomic scope" value="Bacteria"/>
</dbReference>
<dbReference type="HOGENOM" id="CLU_122625_1_3_0"/>
<dbReference type="InParanoid" id="Q8RIF4"/>
<dbReference type="BioCyc" id="FNUC190304:G1FZS-149-MONOMER"/>
<dbReference type="Proteomes" id="UP000002521">
    <property type="component" value="Chromosome"/>
</dbReference>
<dbReference type="GO" id="GO:0015935">
    <property type="term" value="C:small ribosomal subunit"/>
    <property type="evidence" value="ECO:0000318"/>
    <property type="project" value="GO_Central"/>
</dbReference>
<dbReference type="GO" id="GO:0003735">
    <property type="term" value="F:structural constituent of ribosome"/>
    <property type="evidence" value="ECO:0000318"/>
    <property type="project" value="GO_Central"/>
</dbReference>
<dbReference type="GO" id="GO:0000049">
    <property type="term" value="F:tRNA binding"/>
    <property type="evidence" value="ECO:0007669"/>
    <property type="project" value="UniProtKB-UniRule"/>
</dbReference>
<dbReference type="GO" id="GO:0006412">
    <property type="term" value="P:translation"/>
    <property type="evidence" value="ECO:0007669"/>
    <property type="project" value="UniProtKB-UniRule"/>
</dbReference>
<dbReference type="FunFam" id="3.30.70.600:FF:000003">
    <property type="entry name" value="30S ribosomal protein S10"/>
    <property type="match status" value="1"/>
</dbReference>
<dbReference type="Gene3D" id="3.30.70.600">
    <property type="entry name" value="Ribosomal protein S10 domain"/>
    <property type="match status" value="1"/>
</dbReference>
<dbReference type="HAMAP" id="MF_00508">
    <property type="entry name" value="Ribosomal_uS10"/>
    <property type="match status" value="1"/>
</dbReference>
<dbReference type="InterPro" id="IPR001848">
    <property type="entry name" value="Ribosomal_uS10"/>
</dbReference>
<dbReference type="InterPro" id="IPR018268">
    <property type="entry name" value="Ribosomal_uS10_CS"/>
</dbReference>
<dbReference type="InterPro" id="IPR027486">
    <property type="entry name" value="Ribosomal_uS10_dom"/>
</dbReference>
<dbReference type="InterPro" id="IPR036838">
    <property type="entry name" value="Ribosomal_uS10_dom_sf"/>
</dbReference>
<dbReference type="NCBIfam" id="NF001861">
    <property type="entry name" value="PRK00596.1"/>
    <property type="match status" value="1"/>
</dbReference>
<dbReference type="NCBIfam" id="TIGR01049">
    <property type="entry name" value="rpsJ_bact"/>
    <property type="match status" value="1"/>
</dbReference>
<dbReference type="PANTHER" id="PTHR11700">
    <property type="entry name" value="30S RIBOSOMAL PROTEIN S10 FAMILY MEMBER"/>
    <property type="match status" value="1"/>
</dbReference>
<dbReference type="Pfam" id="PF00338">
    <property type="entry name" value="Ribosomal_S10"/>
    <property type="match status" value="1"/>
</dbReference>
<dbReference type="PRINTS" id="PR00971">
    <property type="entry name" value="RIBOSOMALS10"/>
</dbReference>
<dbReference type="SMART" id="SM01403">
    <property type="entry name" value="Ribosomal_S10"/>
    <property type="match status" value="1"/>
</dbReference>
<dbReference type="SUPFAM" id="SSF54999">
    <property type="entry name" value="Ribosomal protein S10"/>
    <property type="match status" value="1"/>
</dbReference>
<dbReference type="PROSITE" id="PS00361">
    <property type="entry name" value="RIBOSOMAL_S10"/>
    <property type="match status" value="1"/>
</dbReference>
<comment type="function">
    <text evidence="1">Involved in the binding of tRNA to the ribosomes.</text>
</comment>
<comment type="subunit">
    <text evidence="1">Part of the 30S ribosomal subunit.</text>
</comment>
<comment type="similarity">
    <text evidence="1">Belongs to the universal ribosomal protein uS10 family.</text>
</comment>
<organism>
    <name type="scientific">Fusobacterium nucleatum subsp. nucleatum (strain ATCC 25586 / DSM 15643 / BCRC 10681 / CIP 101130 / JCM 8532 / KCTC 2640 / LMG 13131 / VPI 4355)</name>
    <dbReference type="NCBI Taxonomy" id="190304"/>
    <lineage>
        <taxon>Bacteria</taxon>
        <taxon>Fusobacteriati</taxon>
        <taxon>Fusobacteriota</taxon>
        <taxon>Fusobacteriia</taxon>
        <taxon>Fusobacteriales</taxon>
        <taxon>Fusobacteriaceae</taxon>
        <taxon>Fusobacterium</taxon>
    </lineage>
</organism>
<reference key="1">
    <citation type="journal article" date="2002" name="J. Bacteriol.">
        <title>Genome sequence and analysis of the oral bacterium Fusobacterium nucleatum strain ATCC 25586.</title>
        <authorList>
            <person name="Kapatral V."/>
            <person name="Anderson I."/>
            <person name="Ivanova N."/>
            <person name="Reznik G."/>
            <person name="Los T."/>
            <person name="Lykidis A."/>
            <person name="Bhattacharyya A."/>
            <person name="Bartman A."/>
            <person name="Gardner W."/>
            <person name="Grechkin G."/>
            <person name="Zhu L."/>
            <person name="Vasieva O."/>
            <person name="Chu L."/>
            <person name="Kogan Y."/>
            <person name="Chaga O."/>
            <person name="Goltsman E."/>
            <person name="Bernal A."/>
            <person name="Larsen N."/>
            <person name="D'Souza M."/>
            <person name="Walunas T."/>
            <person name="Pusch G."/>
            <person name="Haselkorn R."/>
            <person name="Fonstein M."/>
            <person name="Kyrpides N.C."/>
            <person name="Overbeek R."/>
        </authorList>
    </citation>
    <scope>NUCLEOTIDE SEQUENCE [LARGE SCALE GENOMIC DNA]</scope>
    <source>
        <strain>ATCC 25586 / DSM 15643 / BCRC 10681 / CIP 101130 / JCM 8532 / KCTC 2640 / LMG 13131 / VPI 4355</strain>
    </source>
</reference>
<proteinExistence type="inferred from homology"/>
<accession>Q8RIF4</accession>
<name>RS10_FUSNN</name>
<keyword id="KW-1185">Reference proteome</keyword>
<keyword id="KW-0687">Ribonucleoprotein</keyword>
<keyword id="KW-0689">Ribosomal protein</keyword>
<evidence type="ECO:0000255" key="1">
    <source>
        <dbReference type="HAMAP-Rule" id="MF_00508"/>
    </source>
</evidence>
<evidence type="ECO:0000305" key="2"/>
<protein>
    <recommendedName>
        <fullName evidence="1">Small ribosomal subunit protein uS10</fullName>
    </recommendedName>
    <alternativeName>
        <fullName evidence="2">30S ribosomal protein S10</fullName>
    </alternativeName>
</protein>
<gene>
    <name evidence="1" type="primary">rpsJ</name>
    <name type="ordered locus">FN1646</name>
</gene>